<organism>
    <name type="scientific">Burkholderia cenocepacia (strain HI2424)</name>
    <dbReference type="NCBI Taxonomy" id="331272"/>
    <lineage>
        <taxon>Bacteria</taxon>
        <taxon>Pseudomonadati</taxon>
        <taxon>Pseudomonadota</taxon>
        <taxon>Betaproteobacteria</taxon>
        <taxon>Burkholderiales</taxon>
        <taxon>Burkholderiaceae</taxon>
        <taxon>Burkholderia</taxon>
        <taxon>Burkholderia cepacia complex</taxon>
    </lineage>
</organism>
<sequence>MTALLIDGNALSKTLRAQAAERAAALTARGHQPGLAVILVGANPASEVYVRNKIKACEDNGFFSLKDAYPATLSEADLLARIDELNRDPKIHGILVQLPLPAHIDSHKVIEAIAPEKDVDGFHVANAGALMTGKPLFRPCTPYGVMKMFEAHGIALQGANAVVIGRSNIVGKPMAMMLLDAGATVTICHSKTRDLAAHTREADIVVAAVGKRNILTADMVKPGATVIDVGMNRDDAGKLCGDVDFAGVKEVAGYITPVPGGVGPMTITMLLINTIESAERAAAAA</sequence>
<reference key="1">
    <citation type="submission" date="2006-08" db="EMBL/GenBank/DDBJ databases">
        <title>Complete sequence of chromosome 1 of Burkholderia cenocepacia HI2424.</title>
        <authorList>
            <person name="Copeland A."/>
            <person name="Lucas S."/>
            <person name="Lapidus A."/>
            <person name="Barry K."/>
            <person name="Detter J.C."/>
            <person name="Glavina del Rio T."/>
            <person name="Hammon N."/>
            <person name="Israni S."/>
            <person name="Pitluck S."/>
            <person name="Chain P."/>
            <person name="Malfatti S."/>
            <person name="Shin M."/>
            <person name="Vergez L."/>
            <person name="Schmutz J."/>
            <person name="Larimer F."/>
            <person name="Land M."/>
            <person name="Hauser L."/>
            <person name="Kyrpides N."/>
            <person name="Kim E."/>
            <person name="LiPuma J.J."/>
            <person name="Gonzalez C.F."/>
            <person name="Konstantinidis K."/>
            <person name="Tiedje J.M."/>
            <person name="Richardson P."/>
        </authorList>
    </citation>
    <scope>NUCLEOTIDE SEQUENCE [LARGE SCALE GENOMIC DNA]</scope>
    <source>
        <strain>HI2424</strain>
    </source>
</reference>
<evidence type="ECO:0000255" key="1">
    <source>
        <dbReference type="HAMAP-Rule" id="MF_01576"/>
    </source>
</evidence>
<protein>
    <recommendedName>
        <fullName evidence="1">Bifunctional protein FolD</fullName>
    </recommendedName>
    <domain>
        <recommendedName>
            <fullName evidence="1">Methylenetetrahydrofolate dehydrogenase</fullName>
            <ecNumber evidence="1">1.5.1.5</ecNumber>
        </recommendedName>
    </domain>
    <domain>
        <recommendedName>
            <fullName evidence="1">Methenyltetrahydrofolate cyclohydrolase</fullName>
            <ecNumber evidence="1">3.5.4.9</ecNumber>
        </recommendedName>
    </domain>
</protein>
<proteinExistence type="inferred from homology"/>
<comment type="function">
    <text evidence="1">Catalyzes the oxidation of 5,10-methylenetetrahydrofolate to 5,10-methenyltetrahydrofolate and then the hydrolysis of 5,10-methenyltetrahydrofolate to 10-formyltetrahydrofolate.</text>
</comment>
<comment type="catalytic activity">
    <reaction evidence="1">
        <text>(6R)-5,10-methylene-5,6,7,8-tetrahydrofolate + NADP(+) = (6R)-5,10-methenyltetrahydrofolate + NADPH</text>
        <dbReference type="Rhea" id="RHEA:22812"/>
        <dbReference type="ChEBI" id="CHEBI:15636"/>
        <dbReference type="ChEBI" id="CHEBI:57455"/>
        <dbReference type="ChEBI" id="CHEBI:57783"/>
        <dbReference type="ChEBI" id="CHEBI:58349"/>
        <dbReference type="EC" id="1.5.1.5"/>
    </reaction>
</comment>
<comment type="catalytic activity">
    <reaction evidence="1">
        <text>(6R)-5,10-methenyltetrahydrofolate + H2O = (6R)-10-formyltetrahydrofolate + H(+)</text>
        <dbReference type="Rhea" id="RHEA:23700"/>
        <dbReference type="ChEBI" id="CHEBI:15377"/>
        <dbReference type="ChEBI" id="CHEBI:15378"/>
        <dbReference type="ChEBI" id="CHEBI:57455"/>
        <dbReference type="ChEBI" id="CHEBI:195366"/>
        <dbReference type="EC" id="3.5.4.9"/>
    </reaction>
</comment>
<comment type="pathway">
    <text evidence="1">One-carbon metabolism; tetrahydrofolate interconversion.</text>
</comment>
<comment type="subunit">
    <text evidence="1">Homodimer.</text>
</comment>
<comment type="similarity">
    <text evidence="1">Belongs to the tetrahydrofolate dehydrogenase/cyclohydrolase family.</text>
</comment>
<dbReference type="EC" id="1.5.1.5" evidence="1"/>
<dbReference type="EC" id="3.5.4.9" evidence="1"/>
<dbReference type="EMBL" id="CP000458">
    <property type="protein sequence ID" value="ABK08891.1"/>
    <property type="molecule type" value="Genomic_DNA"/>
</dbReference>
<dbReference type="RefSeq" id="WP_011694326.1">
    <property type="nucleotide sequence ID" value="NC_008542.1"/>
</dbReference>
<dbReference type="SMR" id="A0K8R4"/>
<dbReference type="KEGG" id="bch:Bcen2424_2140"/>
<dbReference type="HOGENOM" id="CLU_034045_2_1_4"/>
<dbReference type="UniPathway" id="UPA00193"/>
<dbReference type="GO" id="GO:0005829">
    <property type="term" value="C:cytosol"/>
    <property type="evidence" value="ECO:0007669"/>
    <property type="project" value="TreeGrafter"/>
</dbReference>
<dbReference type="GO" id="GO:0004477">
    <property type="term" value="F:methenyltetrahydrofolate cyclohydrolase activity"/>
    <property type="evidence" value="ECO:0007669"/>
    <property type="project" value="UniProtKB-UniRule"/>
</dbReference>
<dbReference type="GO" id="GO:0004488">
    <property type="term" value="F:methylenetetrahydrofolate dehydrogenase (NADP+) activity"/>
    <property type="evidence" value="ECO:0007669"/>
    <property type="project" value="UniProtKB-UniRule"/>
</dbReference>
<dbReference type="GO" id="GO:0000105">
    <property type="term" value="P:L-histidine biosynthetic process"/>
    <property type="evidence" value="ECO:0007669"/>
    <property type="project" value="UniProtKB-KW"/>
</dbReference>
<dbReference type="GO" id="GO:0009086">
    <property type="term" value="P:methionine biosynthetic process"/>
    <property type="evidence" value="ECO:0007669"/>
    <property type="project" value="UniProtKB-KW"/>
</dbReference>
<dbReference type="GO" id="GO:0006164">
    <property type="term" value="P:purine nucleotide biosynthetic process"/>
    <property type="evidence" value="ECO:0007669"/>
    <property type="project" value="UniProtKB-KW"/>
</dbReference>
<dbReference type="GO" id="GO:0035999">
    <property type="term" value="P:tetrahydrofolate interconversion"/>
    <property type="evidence" value="ECO:0007669"/>
    <property type="project" value="UniProtKB-UniRule"/>
</dbReference>
<dbReference type="CDD" id="cd01080">
    <property type="entry name" value="NAD_bind_m-THF_DH_Cyclohyd"/>
    <property type="match status" value="1"/>
</dbReference>
<dbReference type="FunFam" id="3.40.50.720:FF:000094">
    <property type="entry name" value="Bifunctional protein FolD"/>
    <property type="match status" value="1"/>
</dbReference>
<dbReference type="FunFam" id="3.40.50.10860:FF:000005">
    <property type="entry name" value="C-1-tetrahydrofolate synthase, cytoplasmic, putative"/>
    <property type="match status" value="1"/>
</dbReference>
<dbReference type="Gene3D" id="3.40.50.10860">
    <property type="entry name" value="Leucine Dehydrogenase, chain A, domain 1"/>
    <property type="match status" value="1"/>
</dbReference>
<dbReference type="Gene3D" id="3.40.50.720">
    <property type="entry name" value="NAD(P)-binding Rossmann-like Domain"/>
    <property type="match status" value="1"/>
</dbReference>
<dbReference type="HAMAP" id="MF_01576">
    <property type="entry name" value="THF_DHG_CYH"/>
    <property type="match status" value="1"/>
</dbReference>
<dbReference type="InterPro" id="IPR046346">
    <property type="entry name" value="Aminoacid_DH-like_N_sf"/>
</dbReference>
<dbReference type="InterPro" id="IPR036291">
    <property type="entry name" value="NAD(P)-bd_dom_sf"/>
</dbReference>
<dbReference type="InterPro" id="IPR000672">
    <property type="entry name" value="THF_DH/CycHdrlase"/>
</dbReference>
<dbReference type="InterPro" id="IPR020630">
    <property type="entry name" value="THF_DH/CycHdrlase_cat_dom"/>
</dbReference>
<dbReference type="InterPro" id="IPR020867">
    <property type="entry name" value="THF_DH/CycHdrlase_CS"/>
</dbReference>
<dbReference type="InterPro" id="IPR020631">
    <property type="entry name" value="THF_DH/CycHdrlase_NAD-bd_dom"/>
</dbReference>
<dbReference type="NCBIfam" id="NF008058">
    <property type="entry name" value="PRK10792.1"/>
    <property type="match status" value="1"/>
</dbReference>
<dbReference type="NCBIfam" id="NF010783">
    <property type="entry name" value="PRK14186.1"/>
    <property type="match status" value="1"/>
</dbReference>
<dbReference type="NCBIfam" id="NF010786">
    <property type="entry name" value="PRK14189.1"/>
    <property type="match status" value="1"/>
</dbReference>
<dbReference type="PANTHER" id="PTHR48099:SF5">
    <property type="entry name" value="C-1-TETRAHYDROFOLATE SYNTHASE, CYTOPLASMIC"/>
    <property type="match status" value="1"/>
</dbReference>
<dbReference type="PANTHER" id="PTHR48099">
    <property type="entry name" value="C-1-TETRAHYDROFOLATE SYNTHASE, CYTOPLASMIC-RELATED"/>
    <property type="match status" value="1"/>
</dbReference>
<dbReference type="Pfam" id="PF00763">
    <property type="entry name" value="THF_DHG_CYH"/>
    <property type="match status" value="1"/>
</dbReference>
<dbReference type="Pfam" id="PF02882">
    <property type="entry name" value="THF_DHG_CYH_C"/>
    <property type="match status" value="1"/>
</dbReference>
<dbReference type="PRINTS" id="PR00085">
    <property type="entry name" value="THFDHDRGNASE"/>
</dbReference>
<dbReference type="SUPFAM" id="SSF53223">
    <property type="entry name" value="Aminoacid dehydrogenase-like, N-terminal domain"/>
    <property type="match status" value="1"/>
</dbReference>
<dbReference type="SUPFAM" id="SSF51735">
    <property type="entry name" value="NAD(P)-binding Rossmann-fold domains"/>
    <property type="match status" value="1"/>
</dbReference>
<dbReference type="PROSITE" id="PS00766">
    <property type="entry name" value="THF_DHG_CYH_1"/>
    <property type="match status" value="1"/>
</dbReference>
<dbReference type="PROSITE" id="PS00767">
    <property type="entry name" value="THF_DHG_CYH_2"/>
    <property type="match status" value="1"/>
</dbReference>
<keyword id="KW-0028">Amino-acid biosynthesis</keyword>
<keyword id="KW-0368">Histidine biosynthesis</keyword>
<keyword id="KW-0378">Hydrolase</keyword>
<keyword id="KW-0486">Methionine biosynthesis</keyword>
<keyword id="KW-0511">Multifunctional enzyme</keyword>
<keyword id="KW-0521">NADP</keyword>
<keyword id="KW-0554">One-carbon metabolism</keyword>
<keyword id="KW-0560">Oxidoreductase</keyword>
<keyword id="KW-0658">Purine biosynthesis</keyword>
<gene>
    <name evidence="1" type="primary">folD</name>
    <name type="ordered locus">Bcen2424_2140</name>
</gene>
<feature type="chain" id="PRO_0000305802" description="Bifunctional protein FolD">
    <location>
        <begin position="1"/>
        <end position="285"/>
    </location>
</feature>
<feature type="binding site" evidence="1">
    <location>
        <begin position="165"/>
        <end position="167"/>
    </location>
    <ligand>
        <name>NADP(+)</name>
        <dbReference type="ChEBI" id="CHEBI:58349"/>
    </ligand>
</feature>
<feature type="binding site" evidence="1">
    <location>
        <position position="190"/>
    </location>
    <ligand>
        <name>NADP(+)</name>
        <dbReference type="ChEBI" id="CHEBI:58349"/>
    </ligand>
</feature>
<accession>A0K8R4</accession>
<name>FOLD_BURCH</name>